<accession>Q59P44</accession>
<accession>A0A1D8PHL2</accession>
<evidence type="ECO:0000255" key="1">
    <source>
        <dbReference type="HAMAP-Rule" id="MF_03153"/>
    </source>
</evidence>
<evidence type="ECO:0000256" key="2">
    <source>
        <dbReference type="SAM" id="MobiDB-lite"/>
    </source>
</evidence>
<comment type="function">
    <text evidence="1">Component of the spliceosomal U1 snRNP, which is essential for recognition of the pre-mRNA 5' splice-site and the subsequent assembly of the spliceosome. U1-C is directly involved in initial 5' splice-site recognition for both constitutive and regulated alternative splicing. The interaction with the 5' splice-site seems to precede base-pairing between the pre-mRNA and the U1 snRNA. Stimulates commitment or early (E) complex formation by stabilizing the base pairing of the 5' end of the U1 snRNA and the 5' splice-site region.</text>
</comment>
<comment type="subunit">
    <text evidence="1">U1 snRNP is composed of the 7 core Sm proteins B/B', D1, D2, D3, E, F and G that assemble in a heptameric protein ring on the Sm site of the small nuclear RNA to form the core snRNP, and at least 3 U1 snRNP-specific proteins U1-70K, U1-A and U1-C. U1-C interacts with U1 snRNA and the 5' splice-site region of the pre-mRNA.</text>
</comment>
<comment type="subcellular location">
    <subcellularLocation>
        <location evidence="1">Nucleus</location>
    </subcellularLocation>
</comment>
<comment type="similarity">
    <text evidence="1">Belongs to the U1 small nuclear ribonucleoprotein C family.</text>
</comment>
<reference key="1">
    <citation type="journal article" date="2004" name="Proc. Natl. Acad. Sci. U.S.A.">
        <title>The diploid genome sequence of Candida albicans.</title>
        <authorList>
            <person name="Jones T."/>
            <person name="Federspiel N.A."/>
            <person name="Chibana H."/>
            <person name="Dungan J."/>
            <person name="Kalman S."/>
            <person name="Magee B.B."/>
            <person name="Newport G."/>
            <person name="Thorstenson Y.R."/>
            <person name="Agabian N."/>
            <person name="Magee P.T."/>
            <person name="Davis R.W."/>
            <person name="Scherer S."/>
        </authorList>
    </citation>
    <scope>NUCLEOTIDE SEQUENCE [LARGE SCALE GENOMIC DNA]</scope>
    <source>
        <strain>SC5314 / ATCC MYA-2876</strain>
    </source>
</reference>
<reference key="2">
    <citation type="journal article" date="2007" name="Genome Biol.">
        <title>Assembly of the Candida albicans genome into sixteen supercontigs aligned on the eight chromosomes.</title>
        <authorList>
            <person name="van het Hoog M."/>
            <person name="Rast T.J."/>
            <person name="Martchenko M."/>
            <person name="Grindle S."/>
            <person name="Dignard D."/>
            <person name="Hogues H."/>
            <person name="Cuomo C."/>
            <person name="Berriman M."/>
            <person name="Scherer S."/>
            <person name="Magee B.B."/>
            <person name="Whiteway M."/>
            <person name="Chibana H."/>
            <person name="Nantel A."/>
            <person name="Magee P.T."/>
        </authorList>
    </citation>
    <scope>GENOME REANNOTATION</scope>
    <source>
        <strain>SC5314 / ATCC MYA-2876</strain>
    </source>
</reference>
<reference key="3">
    <citation type="journal article" date="2013" name="Genome Biol.">
        <title>Assembly of a phased diploid Candida albicans genome facilitates allele-specific measurements and provides a simple model for repeat and indel structure.</title>
        <authorList>
            <person name="Muzzey D."/>
            <person name="Schwartz K."/>
            <person name="Weissman J.S."/>
            <person name="Sherlock G."/>
        </authorList>
    </citation>
    <scope>NUCLEOTIDE SEQUENCE [LARGE SCALE GENOMIC DNA]</scope>
    <scope>GENOME REANNOTATION</scope>
    <source>
        <strain>SC5314 / ATCC MYA-2876</strain>
    </source>
</reference>
<name>RU1C_CANAL</name>
<protein>
    <recommendedName>
        <fullName evidence="1">U1 small nuclear ribonucleoprotein C</fullName>
        <shortName evidence="1">U1 snRNP C</shortName>
        <shortName evidence="1">U1-C</shortName>
        <shortName evidence="1">U1C</shortName>
    </recommendedName>
</protein>
<gene>
    <name evidence="1" type="primary">YHC1</name>
    <name type="ordered locus">CAALFM_C206300WA</name>
    <name type="ORF">CaO19.12947</name>
    <name type="ORF">CaO19.5492</name>
</gene>
<organism>
    <name type="scientific">Candida albicans (strain SC5314 / ATCC MYA-2876)</name>
    <name type="common">Yeast</name>
    <dbReference type="NCBI Taxonomy" id="237561"/>
    <lineage>
        <taxon>Eukaryota</taxon>
        <taxon>Fungi</taxon>
        <taxon>Dikarya</taxon>
        <taxon>Ascomycota</taxon>
        <taxon>Saccharomycotina</taxon>
        <taxon>Pichiomycetes</taxon>
        <taxon>Debaryomycetaceae</taxon>
        <taxon>Candida/Lodderomyces clade</taxon>
        <taxon>Candida</taxon>
    </lineage>
</organism>
<dbReference type="EMBL" id="CP017624">
    <property type="protein sequence ID" value="AOW27638.1"/>
    <property type="molecule type" value="Genomic_DNA"/>
</dbReference>
<dbReference type="RefSeq" id="XP_711484.1">
    <property type="nucleotide sequence ID" value="XM_706392.1"/>
</dbReference>
<dbReference type="SMR" id="Q59P44"/>
<dbReference type="STRING" id="237561.Q59P44"/>
<dbReference type="EnsemblFungi" id="C2_06300W_A-T">
    <property type="protein sequence ID" value="C2_06300W_A-T-p1"/>
    <property type="gene ID" value="C2_06300W_A"/>
</dbReference>
<dbReference type="GeneID" id="3646924"/>
<dbReference type="KEGG" id="cal:CAALFM_C206300WA"/>
<dbReference type="CGD" id="CAL0000200741">
    <property type="gene designation" value="YHC1"/>
</dbReference>
<dbReference type="VEuPathDB" id="FungiDB:C2_06300W_A"/>
<dbReference type="eggNOG" id="KOG3454">
    <property type="taxonomic scope" value="Eukaryota"/>
</dbReference>
<dbReference type="HOGENOM" id="CLU_146144_0_0_1"/>
<dbReference type="InParanoid" id="Q59P44"/>
<dbReference type="OMA" id="YLTHDTM"/>
<dbReference type="OrthoDB" id="76567at2759"/>
<dbReference type="PRO" id="PR:Q59P44"/>
<dbReference type="Proteomes" id="UP000000559">
    <property type="component" value="Chromosome 2"/>
</dbReference>
<dbReference type="GO" id="GO:0000243">
    <property type="term" value="C:commitment complex"/>
    <property type="evidence" value="ECO:0007669"/>
    <property type="project" value="UniProtKB-UniRule"/>
</dbReference>
<dbReference type="GO" id="GO:0005685">
    <property type="term" value="C:U1 snRNP"/>
    <property type="evidence" value="ECO:0007669"/>
    <property type="project" value="UniProtKB-UniRule"/>
</dbReference>
<dbReference type="GO" id="GO:0071004">
    <property type="term" value="C:U2-type prespliceosome"/>
    <property type="evidence" value="ECO:0007669"/>
    <property type="project" value="UniProtKB-UniRule"/>
</dbReference>
<dbReference type="GO" id="GO:0003729">
    <property type="term" value="F:mRNA binding"/>
    <property type="evidence" value="ECO:0007669"/>
    <property type="project" value="UniProtKB-UniRule"/>
</dbReference>
<dbReference type="GO" id="GO:0030627">
    <property type="term" value="F:pre-mRNA 5'-splice site binding"/>
    <property type="evidence" value="ECO:0007669"/>
    <property type="project" value="InterPro"/>
</dbReference>
<dbReference type="GO" id="GO:0030619">
    <property type="term" value="F:U1 snRNA binding"/>
    <property type="evidence" value="ECO:0007669"/>
    <property type="project" value="UniProtKB-UniRule"/>
</dbReference>
<dbReference type="GO" id="GO:0008270">
    <property type="term" value="F:zinc ion binding"/>
    <property type="evidence" value="ECO:0007669"/>
    <property type="project" value="UniProtKB-UniRule"/>
</dbReference>
<dbReference type="GO" id="GO:0044180">
    <property type="term" value="P:filamentous growth of a unicellular organism"/>
    <property type="evidence" value="ECO:0000315"/>
    <property type="project" value="CGD"/>
</dbReference>
<dbReference type="GO" id="GO:0000395">
    <property type="term" value="P:mRNA 5'-splice site recognition"/>
    <property type="evidence" value="ECO:0007669"/>
    <property type="project" value="UniProtKB-UniRule"/>
</dbReference>
<dbReference type="GO" id="GO:0000387">
    <property type="term" value="P:spliceosomal snRNP assembly"/>
    <property type="evidence" value="ECO:0007669"/>
    <property type="project" value="UniProtKB-UniRule"/>
</dbReference>
<dbReference type="FunFam" id="3.30.160.60:FF:000890">
    <property type="entry name" value="U1 small nuclear ribonucleoprotein C"/>
    <property type="match status" value="1"/>
</dbReference>
<dbReference type="Gene3D" id="3.30.160.60">
    <property type="entry name" value="Classic Zinc Finger"/>
    <property type="match status" value="1"/>
</dbReference>
<dbReference type="HAMAP" id="MF_03153">
    <property type="entry name" value="U1_C"/>
    <property type="match status" value="1"/>
</dbReference>
<dbReference type="InterPro" id="IPR000690">
    <property type="entry name" value="Matrin/U1-C_Znf_C2H2"/>
</dbReference>
<dbReference type="InterPro" id="IPR003604">
    <property type="entry name" value="Matrin/U1-like-C_Znf_C2H2"/>
</dbReference>
<dbReference type="InterPro" id="IPR013085">
    <property type="entry name" value="U1-CZ_Znf_C2H2"/>
</dbReference>
<dbReference type="InterPro" id="IPR017340">
    <property type="entry name" value="U1_snRNP-C"/>
</dbReference>
<dbReference type="InterPro" id="IPR036236">
    <property type="entry name" value="Znf_C2H2_sf"/>
</dbReference>
<dbReference type="PANTHER" id="PTHR31148">
    <property type="entry name" value="U1 SMALL NUCLEAR RIBONUCLEOPROTEIN C"/>
    <property type="match status" value="1"/>
</dbReference>
<dbReference type="PANTHER" id="PTHR31148:SF1">
    <property type="entry name" value="U1 SMALL NUCLEAR RIBONUCLEOPROTEIN C"/>
    <property type="match status" value="1"/>
</dbReference>
<dbReference type="Pfam" id="PF06220">
    <property type="entry name" value="zf-U1"/>
    <property type="match status" value="1"/>
</dbReference>
<dbReference type="PIRSF" id="PIRSF037969">
    <property type="entry name" value="U1_snRNP-C"/>
    <property type="match status" value="1"/>
</dbReference>
<dbReference type="SMART" id="SM00451">
    <property type="entry name" value="ZnF_U1"/>
    <property type="match status" value="1"/>
</dbReference>
<dbReference type="SUPFAM" id="SSF57667">
    <property type="entry name" value="beta-beta-alpha zinc fingers"/>
    <property type="match status" value="1"/>
</dbReference>
<dbReference type="PROSITE" id="PS50171">
    <property type="entry name" value="ZF_MATRIN"/>
    <property type="match status" value="1"/>
</dbReference>
<proteinExistence type="inferred from homology"/>
<feature type="chain" id="PRO_0000414284" description="U1 small nuclear ribonucleoprotein C">
    <location>
        <begin position="1"/>
        <end position="150"/>
    </location>
</feature>
<feature type="zinc finger region" description="Matrin-type" evidence="1">
    <location>
        <begin position="4"/>
        <end position="36"/>
    </location>
</feature>
<feature type="region of interest" description="Disordered" evidence="2">
    <location>
        <begin position="66"/>
        <end position="132"/>
    </location>
</feature>
<feature type="compositionally biased region" description="Basic and acidic residues" evidence="2">
    <location>
        <begin position="80"/>
        <end position="92"/>
    </location>
</feature>
<feature type="compositionally biased region" description="Acidic residues" evidence="2">
    <location>
        <begin position="103"/>
        <end position="112"/>
    </location>
</feature>
<feature type="compositionally biased region" description="Pro residues" evidence="2">
    <location>
        <begin position="115"/>
        <end position="130"/>
    </location>
</feature>
<keyword id="KW-0479">Metal-binding</keyword>
<keyword id="KW-0539">Nucleus</keyword>
<keyword id="KW-1185">Reference proteome</keyword>
<keyword id="KW-0687">Ribonucleoprotein</keyword>
<keyword id="KW-0694">RNA-binding</keyword>
<keyword id="KW-0862">Zinc</keyword>
<keyword id="KW-0863">Zinc-finger</keyword>
<sequence length="150" mass="17270">MPKYYCDYCKSYLTHDTMSVRKSHLQGRNHIKFYCDYYEAKAKETNIWNPSSIPYEITLEKLNRYSDAKKSNGSSEDNMDIDKKENSSDHNKGNVVNHSDAGNDNDDDDDEMIFLPPPPNLSGLPLPPPAVYNNQKEYQKAILRQTLTKS</sequence>